<name>NADK_ENT38</name>
<accession>A4WDH9</accession>
<protein>
    <recommendedName>
        <fullName evidence="1">NAD kinase</fullName>
        <ecNumber evidence="1">2.7.1.23</ecNumber>
    </recommendedName>
    <alternativeName>
        <fullName evidence="1">ATP-dependent NAD kinase</fullName>
    </alternativeName>
</protein>
<comment type="function">
    <text evidence="1">Involved in the regulation of the intracellular balance of NAD and NADP, and is a key enzyme in the biosynthesis of NADP. Catalyzes specifically the phosphorylation on 2'-hydroxyl of the adenosine moiety of NAD to yield NADP.</text>
</comment>
<comment type="catalytic activity">
    <reaction evidence="1">
        <text>NAD(+) + ATP = ADP + NADP(+) + H(+)</text>
        <dbReference type="Rhea" id="RHEA:18629"/>
        <dbReference type="ChEBI" id="CHEBI:15378"/>
        <dbReference type="ChEBI" id="CHEBI:30616"/>
        <dbReference type="ChEBI" id="CHEBI:57540"/>
        <dbReference type="ChEBI" id="CHEBI:58349"/>
        <dbReference type="ChEBI" id="CHEBI:456216"/>
        <dbReference type="EC" id="2.7.1.23"/>
    </reaction>
</comment>
<comment type="cofactor">
    <cofactor evidence="1">
        <name>a divalent metal cation</name>
        <dbReference type="ChEBI" id="CHEBI:60240"/>
    </cofactor>
</comment>
<comment type="subcellular location">
    <subcellularLocation>
        <location evidence="1">Cytoplasm</location>
    </subcellularLocation>
</comment>
<comment type="similarity">
    <text evidence="1">Belongs to the NAD kinase family.</text>
</comment>
<evidence type="ECO:0000255" key="1">
    <source>
        <dbReference type="HAMAP-Rule" id="MF_00361"/>
    </source>
</evidence>
<sequence length="292" mass="32527">MNNHFKCIGIVGHPRHPTALTTHEMLYRWLCAKGYEVMVEQQIAQELQLKNVKTGTLAEIGQQADLAVVVGGDGNMLGAARTLARYDIKVIGINRGNLGFLTDLDPDNAHQQLADVLDGHYISEKRFLLEAQVCQQDCQKRISTAINEVVLHPGKVAHMIEFEVYIDEVFAFSQRSDGLIISTPTGSTAYSLSAGGPILTPSLDAITLVPMFPHTLSARPLVINSSSTIRLRFSHRRNDLEISCDSQIALPIQEGEDVLIRRCDYHLNLIHPKDYSYFNTLSSKLGWSKKLF</sequence>
<reference key="1">
    <citation type="journal article" date="2010" name="PLoS Genet.">
        <title>Genome sequence of the plant growth promoting endophytic bacterium Enterobacter sp. 638.</title>
        <authorList>
            <person name="Taghavi S."/>
            <person name="van der Lelie D."/>
            <person name="Hoffman A."/>
            <person name="Zhang Y.B."/>
            <person name="Walla M.D."/>
            <person name="Vangronsveld J."/>
            <person name="Newman L."/>
            <person name="Monchy S."/>
        </authorList>
    </citation>
    <scope>NUCLEOTIDE SEQUENCE [LARGE SCALE GENOMIC DNA]</scope>
    <source>
        <strain>638</strain>
    </source>
</reference>
<gene>
    <name evidence="1" type="primary">nadK</name>
    <name type="ordered locus">Ent638_3095</name>
</gene>
<keyword id="KW-0067">ATP-binding</keyword>
<keyword id="KW-0963">Cytoplasm</keyword>
<keyword id="KW-0418">Kinase</keyword>
<keyword id="KW-0520">NAD</keyword>
<keyword id="KW-0521">NADP</keyword>
<keyword id="KW-0547">Nucleotide-binding</keyword>
<keyword id="KW-0808">Transferase</keyword>
<feature type="chain" id="PRO_1000079496" description="NAD kinase">
    <location>
        <begin position="1"/>
        <end position="292"/>
    </location>
</feature>
<feature type="active site" description="Proton acceptor" evidence="1">
    <location>
        <position position="73"/>
    </location>
</feature>
<feature type="binding site" evidence="1">
    <location>
        <begin position="73"/>
        <end position="74"/>
    </location>
    <ligand>
        <name>NAD(+)</name>
        <dbReference type="ChEBI" id="CHEBI:57540"/>
    </ligand>
</feature>
<feature type="binding site" evidence="1">
    <location>
        <begin position="147"/>
        <end position="148"/>
    </location>
    <ligand>
        <name>NAD(+)</name>
        <dbReference type="ChEBI" id="CHEBI:57540"/>
    </ligand>
</feature>
<feature type="binding site" evidence="1">
    <location>
        <position position="158"/>
    </location>
    <ligand>
        <name>NAD(+)</name>
        <dbReference type="ChEBI" id="CHEBI:57540"/>
    </ligand>
</feature>
<feature type="binding site" evidence="1">
    <location>
        <position position="175"/>
    </location>
    <ligand>
        <name>NAD(+)</name>
        <dbReference type="ChEBI" id="CHEBI:57540"/>
    </ligand>
</feature>
<feature type="binding site" evidence="1">
    <location>
        <position position="177"/>
    </location>
    <ligand>
        <name>NAD(+)</name>
        <dbReference type="ChEBI" id="CHEBI:57540"/>
    </ligand>
</feature>
<feature type="binding site" evidence="1">
    <location>
        <begin position="188"/>
        <end position="193"/>
    </location>
    <ligand>
        <name>NAD(+)</name>
        <dbReference type="ChEBI" id="CHEBI:57540"/>
    </ligand>
</feature>
<feature type="binding site" evidence="1">
    <location>
        <position position="247"/>
    </location>
    <ligand>
        <name>NAD(+)</name>
        <dbReference type="ChEBI" id="CHEBI:57540"/>
    </ligand>
</feature>
<proteinExistence type="inferred from homology"/>
<organism>
    <name type="scientific">Enterobacter sp. (strain 638)</name>
    <dbReference type="NCBI Taxonomy" id="399742"/>
    <lineage>
        <taxon>Bacteria</taxon>
        <taxon>Pseudomonadati</taxon>
        <taxon>Pseudomonadota</taxon>
        <taxon>Gammaproteobacteria</taxon>
        <taxon>Enterobacterales</taxon>
        <taxon>Enterobacteriaceae</taxon>
        <taxon>Enterobacter</taxon>
    </lineage>
</organism>
<dbReference type="EC" id="2.7.1.23" evidence="1"/>
<dbReference type="EMBL" id="CP000653">
    <property type="protein sequence ID" value="ABP61759.1"/>
    <property type="molecule type" value="Genomic_DNA"/>
</dbReference>
<dbReference type="RefSeq" id="WP_015960089.1">
    <property type="nucleotide sequence ID" value="NC_009436.1"/>
</dbReference>
<dbReference type="SMR" id="A4WDH9"/>
<dbReference type="STRING" id="399742.Ent638_3095"/>
<dbReference type="GeneID" id="97602924"/>
<dbReference type="KEGG" id="ent:Ent638_3095"/>
<dbReference type="eggNOG" id="COG0061">
    <property type="taxonomic scope" value="Bacteria"/>
</dbReference>
<dbReference type="HOGENOM" id="CLU_008831_0_1_6"/>
<dbReference type="OrthoDB" id="9774737at2"/>
<dbReference type="Proteomes" id="UP000000230">
    <property type="component" value="Chromosome"/>
</dbReference>
<dbReference type="GO" id="GO:0005737">
    <property type="term" value="C:cytoplasm"/>
    <property type="evidence" value="ECO:0007669"/>
    <property type="project" value="UniProtKB-SubCell"/>
</dbReference>
<dbReference type="GO" id="GO:0005524">
    <property type="term" value="F:ATP binding"/>
    <property type="evidence" value="ECO:0007669"/>
    <property type="project" value="UniProtKB-KW"/>
</dbReference>
<dbReference type="GO" id="GO:0046872">
    <property type="term" value="F:metal ion binding"/>
    <property type="evidence" value="ECO:0007669"/>
    <property type="project" value="UniProtKB-UniRule"/>
</dbReference>
<dbReference type="GO" id="GO:0051287">
    <property type="term" value="F:NAD binding"/>
    <property type="evidence" value="ECO:0007669"/>
    <property type="project" value="UniProtKB-ARBA"/>
</dbReference>
<dbReference type="GO" id="GO:0003951">
    <property type="term" value="F:NAD+ kinase activity"/>
    <property type="evidence" value="ECO:0007669"/>
    <property type="project" value="UniProtKB-UniRule"/>
</dbReference>
<dbReference type="GO" id="GO:0019674">
    <property type="term" value="P:NAD metabolic process"/>
    <property type="evidence" value="ECO:0007669"/>
    <property type="project" value="InterPro"/>
</dbReference>
<dbReference type="GO" id="GO:0006741">
    <property type="term" value="P:NADP biosynthetic process"/>
    <property type="evidence" value="ECO:0007669"/>
    <property type="project" value="UniProtKB-UniRule"/>
</dbReference>
<dbReference type="FunFam" id="2.60.200.30:FF:000001">
    <property type="entry name" value="NAD kinase"/>
    <property type="match status" value="1"/>
</dbReference>
<dbReference type="FunFam" id="3.40.50.10330:FF:000004">
    <property type="entry name" value="NAD kinase"/>
    <property type="match status" value="1"/>
</dbReference>
<dbReference type="Gene3D" id="3.40.50.10330">
    <property type="entry name" value="Probable inorganic polyphosphate/atp-NAD kinase, domain 1"/>
    <property type="match status" value="1"/>
</dbReference>
<dbReference type="Gene3D" id="2.60.200.30">
    <property type="entry name" value="Probable inorganic polyphosphate/atp-NAD kinase, domain 2"/>
    <property type="match status" value="1"/>
</dbReference>
<dbReference type="HAMAP" id="MF_00361">
    <property type="entry name" value="NAD_kinase"/>
    <property type="match status" value="1"/>
</dbReference>
<dbReference type="InterPro" id="IPR017438">
    <property type="entry name" value="ATP-NAD_kinase_N"/>
</dbReference>
<dbReference type="InterPro" id="IPR017437">
    <property type="entry name" value="ATP-NAD_kinase_PpnK-typ_C"/>
</dbReference>
<dbReference type="InterPro" id="IPR016064">
    <property type="entry name" value="NAD/diacylglycerol_kinase_sf"/>
</dbReference>
<dbReference type="InterPro" id="IPR002504">
    <property type="entry name" value="NADK"/>
</dbReference>
<dbReference type="NCBIfam" id="NF002306">
    <property type="entry name" value="PRK01231.1"/>
    <property type="match status" value="1"/>
</dbReference>
<dbReference type="NCBIfam" id="NF002893">
    <property type="entry name" value="PRK03378.1"/>
    <property type="match status" value="1"/>
</dbReference>
<dbReference type="PANTHER" id="PTHR20275">
    <property type="entry name" value="NAD KINASE"/>
    <property type="match status" value="1"/>
</dbReference>
<dbReference type="PANTHER" id="PTHR20275:SF0">
    <property type="entry name" value="NAD KINASE"/>
    <property type="match status" value="1"/>
</dbReference>
<dbReference type="Pfam" id="PF01513">
    <property type="entry name" value="NAD_kinase"/>
    <property type="match status" value="1"/>
</dbReference>
<dbReference type="Pfam" id="PF20143">
    <property type="entry name" value="NAD_kinase_C"/>
    <property type="match status" value="1"/>
</dbReference>
<dbReference type="SUPFAM" id="SSF111331">
    <property type="entry name" value="NAD kinase/diacylglycerol kinase-like"/>
    <property type="match status" value="1"/>
</dbReference>